<keyword id="KW-0150">Chloroplast</keyword>
<keyword id="KW-0507">mRNA processing</keyword>
<keyword id="KW-0934">Plastid</keyword>
<keyword id="KW-0694">RNA-binding</keyword>
<keyword id="KW-0819">tRNA processing</keyword>
<geneLocation type="chloroplast"/>
<organism>
    <name type="scientific">Tigridia pavonia</name>
    <name type="common">Mexican shell flower</name>
    <name type="synonym">Ferraria pavonia</name>
    <dbReference type="NCBI Taxonomy" id="152754"/>
    <lineage>
        <taxon>Eukaryota</taxon>
        <taxon>Viridiplantae</taxon>
        <taxon>Streptophyta</taxon>
        <taxon>Embryophyta</taxon>
        <taxon>Tracheophyta</taxon>
        <taxon>Spermatophyta</taxon>
        <taxon>Magnoliopsida</taxon>
        <taxon>Liliopsida</taxon>
        <taxon>Asparagales</taxon>
        <taxon>Iridaceae</taxon>
        <taxon>Iridoideae</taxon>
        <taxon>Tigridieae</taxon>
        <taxon>Tigridia</taxon>
    </lineage>
</organism>
<feature type="chain" id="PRO_0000143738" description="Maturase K">
    <location>
        <begin position="1"/>
        <end position="522"/>
    </location>
</feature>
<name>MATK_TIGPA</name>
<reference key="1">
    <citation type="submission" date="2005-07" db="EMBL/GenBank/DDBJ databases">
        <title>Environmental energy and species richness in flowering plants.</title>
        <authorList>
            <person name="Davies T.J."/>
        </authorList>
    </citation>
    <scope>NUCLEOTIDE SEQUENCE [GENOMIC DNA]</scope>
</reference>
<gene>
    <name evidence="1" type="primary">matK</name>
</gene>
<dbReference type="EMBL" id="AJ579987">
    <property type="protein sequence ID" value="CAE45257.1"/>
    <property type="molecule type" value="Genomic_DNA"/>
</dbReference>
<dbReference type="GO" id="GO:0009507">
    <property type="term" value="C:chloroplast"/>
    <property type="evidence" value="ECO:0007669"/>
    <property type="project" value="UniProtKB-SubCell"/>
</dbReference>
<dbReference type="GO" id="GO:0003723">
    <property type="term" value="F:RNA binding"/>
    <property type="evidence" value="ECO:0007669"/>
    <property type="project" value="UniProtKB-KW"/>
</dbReference>
<dbReference type="GO" id="GO:0006397">
    <property type="term" value="P:mRNA processing"/>
    <property type="evidence" value="ECO:0007669"/>
    <property type="project" value="UniProtKB-KW"/>
</dbReference>
<dbReference type="GO" id="GO:0008380">
    <property type="term" value="P:RNA splicing"/>
    <property type="evidence" value="ECO:0007669"/>
    <property type="project" value="UniProtKB-UniRule"/>
</dbReference>
<dbReference type="GO" id="GO:0008033">
    <property type="term" value="P:tRNA processing"/>
    <property type="evidence" value="ECO:0007669"/>
    <property type="project" value="UniProtKB-KW"/>
</dbReference>
<dbReference type="HAMAP" id="MF_01390">
    <property type="entry name" value="MatK"/>
    <property type="match status" value="1"/>
</dbReference>
<dbReference type="InterPro" id="IPR024937">
    <property type="entry name" value="Domain_X"/>
</dbReference>
<dbReference type="InterPro" id="IPR002866">
    <property type="entry name" value="Maturase_MatK"/>
</dbReference>
<dbReference type="InterPro" id="IPR024942">
    <property type="entry name" value="Maturase_MatK_N"/>
</dbReference>
<dbReference type="PANTHER" id="PTHR34811">
    <property type="entry name" value="MATURASE K"/>
    <property type="match status" value="1"/>
</dbReference>
<dbReference type="PANTHER" id="PTHR34811:SF1">
    <property type="entry name" value="MATURASE K"/>
    <property type="match status" value="1"/>
</dbReference>
<dbReference type="Pfam" id="PF01348">
    <property type="entry name" value="Intron_maturas2"/>
    <property type="match status" value="1"/>
</dbReference>
<dbReference type="Pfam" id="PF01824">
    <property type="entry name" value="MatK_N"/>
    <property type="match status" value="1"/>
</dbReference>
<sequence>MEELQGYLEKDRSRQQPFLYPLLFQEYIYALAHDRGLNDSIFDKPVEVFGYDSKSSLALVKRLIIRIYQQNYFLSAVRSFNQNRFLGHHHNNFFYSHFDSQMISEGFAIIVEILFSLRLVSFFEKKEIKKFHHLRSIHSIFPFLEDKLLHLNYVSDILIPHPIHMEILVQILQCWIPDVPLLHFLRFFLHKYHNWNSFLITPKKSIYVFSKENQRLFRFLYNSYVSECEFLLVFLRKQSSYLRLTSFGLFIERRHFYVKIEHLHMQHLLFIVVCRDYFHGTLWFFKDPSMHYVRCQGKAILASKGTHLLMKKWKYNFVNLWQYYFHFWYQSYRIRINQLANYSFYFWGYLSSLLKNYSTVKNKMLENSFLIDTVTNKFEATVPVIFLIGSLSKAQFCTVSGHPISKPTWTDLSDSDIIERFGRMCRNLSHYHSGSSKKQGLYRIKYILRLSCARTLARKHKSTVRTFLXRLGSGLLEEFFTEXDQALSLILPKKIPFIFHGSHKKHIWYLDIIRMNDLVNHS</sequence>
<comment type="function">
    <text evidence="1">Usually encoded in the trnK tRNA gene intron. Probably assists in splicing its own and other chloroplast group II introns.</text>
</comment>
<comment type="subcellular location">
    <subcellularLocation>
        <location>Plastid</location>
        <location>Chloroplast</location>
    </subcellularLocation>
</comment>
<comment type="similarity">
    <text evidence="1">Belongs to the intron maturase 2 family. MatK subfamily.</text>
</comment>
<evidence type="ECO:0000255" key="1">
    <source>
        <dbReference type="HAMAP-Rule" id="MF_01390"/>
    </source>
</evidence>
<accession>Q4H178</accession>
<proteinExistence type="inferred from homology"/>
<protein>
    <recommendedName>
        <fullName evidence="1">Maturase K</fullName>
    </recommendedName>
    <alternativeName>
        <fullName evidence="1">Intron maturase</fullName>
    </alternativeName>
</protein>